<feature type="chain" id="PRO_0000354543" description="Large ribosomal subunit protein uL22">
    <location>
        <begin position="1"/>
        <end position="153"/>
    </location>
</feature>
<gene>
    <name evidence="1" type="primary">rpl22</name>
    <name type="ordered locus">MmarC7_0648</name>
</gene>
<sequence>MAKLKYKVEADPKNTARAMGRTLRISRKHAIELCRELSGMKLDAAVAYLNRVIALETPVPFKVHNKDLPHRKGKIGTHSGRFPQKASLEILQVLDNAKKNAEQKGLNTEKLRIKHISSNRGFTIKRYMPRAFGRASPKNQETIHIQVILEEFY</sequence>
<evidence type="ECO:0000255" key="1">
    <source>
        <dbReference type="HAMAP-Rule" id="MF_01331"/>
    </source>
</evidence>
<evidence type="ECO:0000305" key="2"/>
<proteinExistence type="inferred from homology"/>
<keyword id="KW-0687">Ribonucleoprotein</keyword>
<keyword id="KW-0689">Ribosomal protein</keyword>
<keyword id="KW-0694">RNA-binding</keyword>
<keyword id="KW-0699">rRNA-binding</keyword>
<name>RL22_METM7</name>
<dbReference type="EMBL" id="CP000745">
    <property type="protein sequence ID" value="ABR65715.1"/>
    <property type="molecule type" value="Genomic_DNA"/>
</dbReference>
<dbReference type="SMR" id="A6VGY9"/>
<dbReference type="STRING" id="426368.MmarC7_0648"/>
<dbReference type="KEGG" id="mmz:MmarC7_0648"/>
<dbReference type="eggNOG" id="arCOG04098">
    <property type="taxonomic scope" value="Archaea"/>
</dbReference>
<dbReference type="HOGENOM" id="CLU_083987_0_2_2"/>
<dbReference type="OrthoDB" id="314984at2157"/>
<dbReference type="GO" id="GO:0022625">
    <property type="term" value="C:cytosolic large ribosomal subunit"/>
    <property type="evidence" value="ECO:0007669"/>
    <property type="project" value="TreeGrafter"/>
</dbReference>
<dbReference type="GO" id="GO:0019843">
    <property type="term" value="F:rRNA binding"/>
    <property type="evidence" value="ECO:0007669"/>
    <property type="project" value="UniProtKB-UniRule"/>
</dbReference>
<dbReference type="GO" id="GO:0003735">
    <property type="term" value="F:structural constituent of ribosome"/>
    <property type="evidence" value="ECO:0007669"/>
    <property type="project" value="InterPro"/>
</dbReference>
<dbReference type="GO" id="GO:0002181">
    <property type="term" value="P:cytoplasmic translation"/>
    <property type="evidence" value="ECO:0007669"/>
    <property type="project" value="TreeGrafter"/>
</dbReference>
<dbReference type="CDD" id="cd00336">
    <property type="entry name" value="Ribosomal_L22"/>
    <property type="match status" value="1"/>
</dbReference>
<dbReference type="Gene3D" id="3.90.470.10">
    <property type="entry name" value="Ribosomal protein L22/L17"/>
    <property type="match status" value="1"/>
</dbReference>
<dbReference type="HAMAP" id="MF_01331_A">
    <property type="entry name" value="Ribosomal_uL22_A"/>
    <property type="match status" value="1"/>
</dbReference>
<dbReference type="InterPro" id="IPR001063">
    <property type="entry name" value="Ribosomal_uL22"/>
</dbReference>
<dbReference type="InterPro" id="IPR018260">
    <property type="entry name" value="Ribosomal_uL22_CS"/>
</dbReference>
<dbReference type="InterPro" id="IPR005721">
    <property type="entry name" value="Ribosomal_uL22_euk/arc"/>
</dbReference>
<dbReference type="InterPro" id="IPR036394">
    <property type="entry name" value="Ribosomal_uL22_sf"/>
</dbReference>
<dbReference type="NCBIfam" id="NF003260">
    <property type="entry name" value="PRK04223.1"/>
    <property type="match status" value="1"/>
</dbReference>
<dbReference type="NCBIfam" id="TIGR01038">
    <property type="entry name" value="uL22_arch_euk"/>
    <property type="match status" value="1"/>
</dbReference>
<dbReference type="PANTHER" id="PTHR11593">
    <property type="entry name" value="60S RIBOSOMAL PROTEIN L17"/>
    <property type="match status" value="1"/>
</dbReference>
<dbReference type="PANTHER" id="PTHR11593:SF10">
    <property type="entry name" value="60S RIBOSOMAL PROTEIN L17"/>
    <property type="match status" value="1"/>
</dbReference>
<dbReference type="Pfam" id="PF00237">
    <property type="entry name" value="Ribosomal_L22"/>
    <property type="match status" value="1"/>
</dbReference>
<dbReference type="SUPFAM" id="SSF54843">
    <property type="entry name" value="Ribosomal protein L22"/>
    <property type="match status" value="1"/>
</dbReference>
<dbReference type="PROSITE" id="PS00464">
    <property type="entry name" value="RIBOSOMAL_L22"/>
    <property type="match status" value="1"/>
</dbReference>
<protein>
    <recommendedName>
        <fullName evidence="1">Large ribosomal subunit protein uL22</fullName>
    </recommendedName>
    <alternativeName>
        <fullName evidence="2">50S ribosomal protein L22</fullName>
    </alternativeName>
</protein>
<reference key="1">
    <citation type="submission" date="2007-06" db="EMBL/GenBank/DDBJ databases">
        <title>Complete sequence of Methanococcus maripaludis C7.</title>
        <authorList>
            <consortium name="US DOE Joint Genome Institute"/>
            <person name="Copeland A."/>
            <person name="Lucas S."/>
            <person name="Lapidus A."/>
            <person name="Barry K."/>
            <person name="Glavina del Rio T."/>
            <person name="Dalin E."/>
            <person name="Tice H."/>
            <person name="Pitluck S."/>
            <person name="Clum A."/>
            <person name="Schmutz J."/>
            <person name="Larimer F."/>
            <person name="Land M."/>
            <person name="Hauser L."/>
            <person name="Kyrpides N."/>
            <person name="Anderson I."/>
            <person name="Sieprawska-Lupa M."/>
            <person name="Whitman W.B."/>
            <person name="Richardson P."/>
        </authorList>
    </citation>
    <scope>NUCLEOTIDE SEQUENCE [LARGE SCALE GENOMIC DNA]</scope>
    <source>
        <strain>C7 / ATCC BAA-1331</strain>
    </source>
</reference>
<organism>
    <name type="scientific">Methanococcus maripaludis (strain C7 / ATCC BAA-1331)</name>
    <dbReference type="NCBI Taxonomy" id="426368"/>
    <lineage>
        <taxon>Archaea</taxon>
        <taxon>Methanobacteriati</taxon>
        <taxon>Methanobacteriota</taxon>
        <taxon>Methanomada group</taxon>
        <taxon>Methanococci</taxon>
        <taxon>Methanococcales</taxon>
        <taxon>Methanococcaceae</taxon>
        <taxon>Methanococcus</taxon>
    </lineage>
</organism>
<comment type="function">
    <text evidence="1">This protein binds specifically to 23S rRNA. It makes multiple contacts with different domains of the 23S rRNA in the assembled 50S subunit and ribosome.</text>
</comment>
<comment type="function">
    <text evidence="1">The globular domain of the protein is located near the polypeptide exit tunnel on the outside of the subunit, while an extended beta-hairpin is found that lines the wall of the exit tunnel in the center of the 70S ribosome.</text>
</comment>
<comment type="subunit">
    <text evidence="1">Part of the 50S ribosomal subunit.</text>
</comment>
<comment type="similarity">
    <text evidence="1">Belongs to the universal ribosomal protein uL22 family.</text>
</comment>
<accession>A6VGY9</accession>